<organism>
    <name type="scientific">Pseudomonas fluorescens (strain Pf0-1)</name>
    <dbReference type="NCBI Taxonomy" id="205922"/>
    <lineage>
        <taxon>Bacteria</taxon>
        <taxon>Pseudomonadati</taxon>
        <taxon>Pseudomonadota</taxon>
        <taxon>Gammaproteobacteria</taxon>
        <taxon>Pseudomonadales</taxon>
        <taxon>Pseudomonadaceae</taxon>
        <taxon>Pseudomonas</taxon>
    </lineage>
</organism>
<protein>
    <recommendedName>
        <fullName evidence="1">4-hydroxy-3-methylbut-2-en-1-yl diphosphate synthase (flavodoxin)</fullName>
        <ecNumber evidence="1">1.17.7.3</ecNumber>
    </recommendedName>
    <alternativeName>
        <fullName evidence="1">1-hydroxy-2-methyl-2-(E)-butenyl 4-diphosphate synthase</fullName>
    </alternativeName>
</protein>
<keyword id="KW-0004">4Fe-4S</keyword>
<keyword id="KW-0408">Iron</keyword>
<keyword id="KW-0411">Iron-sulfur</keyword>
<keyword id="KW-0414">Isoprene biosynthesis</keyword>
<keyword id="KW-0479">Metal-binding</keyword>
<keyword id="KW-0560">Oxidoreductase</keyword>
<proteinExistence type="inferred from homology"/>
<reference key="1">
    <citation type="journal article" date="2009" name="Genome Biol.">
        <title>Genomic and genetic analyses of diversity and plant interactions of Pseudomonas fluorescens.</title>
        <authorList>
            <person name="Silby M.W."/>
            <person name="Cerdeno-Tarraga A.M."/>
            <person name="Vernikos G.S."/>
            <person name="Giddens S.R."/>
            <person name="Jackson R.W."/>
            <person name="Preston G.M."/>
            <person name="Zhang X.-X."/>
            <person name="Moon C.D."/>
            <person name="Gehrig S.M."/>
            <person name="Godfrey S.A.C."/>
            <person name="Knight C.G."/>
            <person name="Malone J.G."/>
            <person name="Robinson Z."/>
            <person name="Spiers A.J."/>
            <person name="Harris S."/>
            <person name="Challis G.L."/>
            <person name="Yaxley A.M."/>
            <person name="Harris D."/>
            <person name="Seeger K."/>
            <person name="Murphy L."/>
            <person name="Rutter S."/>
            <person name="Squares R."/>
            <person name="Quail M.A."/>
            <person name="Saunders E."/>
            <person name="Mavromatis K."/>
            <person name="Brettin T.S."/>
            <person name="Bentley S.D."/>
            <person name="Hothersall J."/>
            <person name="Stephens E."/>
            <person name="Thomas C.M."/>
            <person name="Parkhill J."/>
            <person name="Levy S.B."/>
            <person name="Rainey P.B."/>
            <person name="Thomson N.R."/>
        </authorList>
    </citation>
    <scope>NUCLEOTIDE SEQUENCE [LARGE SCALE GENOMIC DNA]</scope>
    <source>
        <strain>Pf0-1</strain>
    </source>
</reference>
<accession>Q3K7B6</accession>
<feature type="chain" id="PRO_1000011503" description="4-hydroxy-3-methylbut-2-en-1-yl diphosphate synthase (flavodoxin)">
    <location>
        <begin position="1"/>
        <end position="369"/>
    </location>
</feature>
<feature type="binding site" evidence="1">
    <location>
        <position position="270"/>
    </location>
    <ligand>
        <name>[4Fe-4S] cluster</name>
        <dbReference type="ChEBI" id="CHEBI:49883"/>
    </ligand>
</feature>
<feature type="binding site" evidence="1">
    <location>
        <position position="273"/>
    </location>
    <ligand>
        <name>[4Fe-4S] cluster</name>
        <dbReference type="ChEBI" id="CHEBI:49883"/>
    </ligand>
</feature>
<feature type="binding site" evidence="1">
    <location>
        <position position="305"/>
    </location>
    <ligand>
        <name>[4Fe-4S] cluster</name>
        <dbReference type="ChEBI" id="CHEBI:49883"/>
    </ligand>
</feature>
<feature type="binding site" evidence="1">
    <location>
        <position position="312"/>
    </location>
    <ligand>
        <name>[4Fe-4S] cluster</name>
        <dbReference type="ChEBI" id="CHEBI:49883"/>
    </ligand>
</feature>
<comment type="function">
    <text evidence="1">Converts 2C-methyl-D-erythritol 2,4-cyclodiphosphate (ME-2,4cPP) into 1-hydroxy-2-methyl-2-(E)-butenyl 4-diphosphate.</text>
</comment>
<comment type="catalytic activity">
    <reaction evidence="1">
        <text>(2E)-4-hydroxy-3-methylbut-2-enyl diphosphate + oxidized [flavodoxin] + H2O + 2 H(+) = 2-C-methyl-D-erythritol 2,4-cyclic diphosphate + reduced [flavodoxin]</text>
        <dbReference type="Rhea" id="RHEA:43604"/>
        <dbReference type="Rhea" id="RHEA-COMP:10622"/>
        <dbReference type="Rhea" id="RHEA-COMP:10623"/>
        <dbReference type="ChEBI" id="CHEBI:15377"/>
        <dbReference type="ChEBI" id="CHEBI:15378"/>
        <dbReference type="ChEBI" id="CHEBI:57618"/>
        <dbReference type="ChEBI" id="CHEBI:58210"/>
        <dbReference type="ChEBI" id="CHEBI:58483"/>
        <dbReference type="ChEBI" id="CHEBI:128753"/>
        <dbReference type="EC" id="1.17.7.3"/>
    </reaction>
</comment>
<comment type="cofactor">
    <cofactor evidence="1">
        <name>[4Fe-4S] cluster</name>
        <dbReference type="ChEBI" id="CHEBI:49883"/>
    </cofactor>
    <text evidence="1">Binds 1 [4Fe-4S] cluster.</text>
</comment>
<comment type="pathway">
    <text evidence="1">Isoprenoid biosynthesis; isopentenyl diphosphate biosynthesis via DXP pathway; isopentenyl diphosphate from 1-deoxy-D-xylulose 5-phosphate: step 5/6.</text>
</comment>
<comment type="similarity">
    <text evidence="1">Belongs to the IspG family.</text>
</comment>
<dbReference type="EC" id="1.17.7.3" evidence="1"/>
<dbReference type="EMBL" id="CP000094">
    <property type="protein sequence ID" value="ABA76338.1"/>
    <property type="molecule type" value="Genomic_DNA"/>
</dbReference>
<dbReference type="RefSeq" id="WP_007956680.1">
    <property type="nucleotide sequence ID" value="NC_007492.2"/>
</dbReference>
<dbReference type="SMR" id="Q3K7B6"/>
<dbReference type="KEGG" id="pfo:Pfl01_4601"/>
<dbReference type="eggNOG" id="COG0821">
    <property type="taxonomic scope" value="Bacteria"/>
</dbReference>
<dbReference type="HOGENOM" id="CLU_042258_0_0_6"/>
<dbReference type="UniPathway" id="UPA00056">
    <property type="reaction ID" value="UER00096"/>
</dbReference>
<dbReference type="Proteomes" id="UP000002704">
    <property type="component" value="Chromosome"/>
</dbReference>
<dbReference type="GO" id="GO:0051539">
    <property type="term" value="F:4 iron, 4 sulfur cluster binding"/>
    <property type="evidence" value="ECO:0007669"/>
    <property type="project" value="UniProtKB-UniRule"/>
</dbReference>
<dbReference type="GO" id="GO:0046429">
    <property type="term" value="F:4-hydroxy-3-methylbut-2-en-1-yl diphosphate synthase activity (ferredoxin)"/>
    <property type="evidence" value="ECO:0007669"/>
    <property type="project" value="UniProtKB-UniRule"/>
</dbReference>
<dbReference type="GO" id="GO:0141197">
    <property type="term" value="F:4-hydroxy-3-methylbut-2-enyl-diphosphate synthase activity (flavodoxin)"/>
    <property type="evidence" value="ECO:0007669"/>
    <property type="project" value="UniProtKB-EC"/>
</dbReference>
<dbReference type="GO" id="GO:0005506">
    <property type="term" value="F:iron ion binding"/>
    <property type="evidence" value="ECO:0007669"/>
    <property type="project" value="InterPro"/>
</dbReference>
<dbReference type="GO" id="GO:0019288">
    <property type="term" value="P:isopentenyl diphosphate biosynthetic process, methylerythritol 4-phosphate pathway"/>
    <property type="evidence" value="ECO:0007669"/>
    <property type="project" value="UniProtKB-UniRule"/>
</dbReference>
<dbReference type="GO" id="GO:0016114">
    <property type="term" value="P:terpenoid biosynthetic process"/>
    <property type="evidence" value="ECO:0007669"/>
    <property type="project" value="InterPro"/>
</dbReference>
<dbReference type="FunFam" id="3.20.20.20:FF:000001">
    <property type="entry name" value="4-hydroxy-3-methylbut-2-en-1-yl diphosphate synthase (flavodoxin)"/>
    <property type="match status" value="1"/>
</dbReference>
<dbReference type="Gene3D" id="3.20.20.20">
    <property type="entry name" value="Dihydropteroate synthase-like"/>
    <property type="match status" value="1"/>
</dbReference>
<dbReference type="Gene3D" id="3.30.413.10">
    <property type="entry name" value="Sulfite Reductase Hemoprotein, domain 1"/>
    <property type="match status" value="1"/>
</dbReference>
<dbReference type="HAMAP" id="MF_00159">
    <property type="entry name" value="IspG"/>
    <property type="match status" value="1"/>
</dbReference>
<dbReference type="InterPro" id="IPR011005">
    <property type="entry name" value="Dihydropteroate_synth-like_sf"/>
</dbReference>
<dbReference type="InterPro" id="IPR016425">
    <property type="entry name" value="IspG_bac"/>
</dbReference>
<dbReference type="InterPro" id="IPR004588">
    <property type="entry name" value="IspG_bac-typ"/>
</dbReference>
<dbReference type="InterPro" id="IPR045854">
    <property type="entry name" value="NO2/SO3_Rdtase_4Fe4S_sf"/>
</dbReference>
<dbReference type="NCBIfam" id="TIGR00612">
    <property type="entry name" value="ispG_gcpE"/>
    <property type="match status" value="1"/>
</dbReference>
<dbReference type="NCBIfam" id="NF001540">
    <property type="entry name" value="PRK00366.1"/>
    <property type="match status" value="1"/>
</dbReference>
<dbReference type="PANTHER" id="PTHR30454">
    <property type="entry name" value="4-HYDROXY-3-METHYLBUT-2-EN-1-YL DIPHOSPHATE SYNTHASE"/>
    <property type="match status" value="1"/>
</dbReference>
<dbReference type="PANTHER" id="PTHR30454:SF0">
    <property type="entry name" value="4-HYDROXY-3-METHYLBUT-2-EN-1-YL DIPHOSPHATE SYNTHASE (FERREDOXIN), CHLOROPLASTIC"/>
    <property type="match status" value="1"/>
</dbReference>
<dbReference type="Pfam" id="PF04551">
    <property type="entry name" value="GcpE"/>
    <property type="match status" value="1"/>
</dbReference>
<dbReference type="PIRSF" id="PIRSF004640">
    <property type="entry name" value="IspG"/>
    <property type="match status" value="1"/>
</dbReference>
<dbReference type="SUPFAM" id="SSF51412">
    <property type="entry name" value="Inosine monophosphate dehydrogenase (IMPDH)"/>
    <property type="match status" value="1"/>
</dbReference>
<dbReference type="SUPFAM" id="SSF56014">
    <property type="entry name" value="Nitrite and sulphite reductase 4Fe-4S domain-like"/>
    <property type="match status" value="1"/>
</dbReference>
<name>ISPG_PSEPF</name>
<gene>
    <name evidence="1" type="primary">ispG</name>
    <name type="ordered locus">Pfl01_4601</name>
</gene>
<evidence type="ECO:0000255" key="1">
    <source>
        <dbReference type="HAMAP-Rule" id="MF_00159"/>
    </source>
</evidence>
<sequence length="369" mass="39703">MHGESPIKRRESRKIWVGNVPVGGDAPIAVQSMTNSDTNDVAATVAQINRLEAAGVDIVRVSVPDMDAAEAFGKIKQLVKVPLVADIHFDYKIALRVAELGVDCLRINPGNIGREDRVRAVVDAARDRGIPIRIGVNAGSLEKDLQKKYGEPTPAALVESALRHVEHLERLNFQDFKVSVKASDVFMAVEAYRLLAKEIVQPLHLGITEAGGLRSGTVKSAVGLGMLLAEGIGDTIRISLAADPVEEVKVGYDILKSLHLRSRGINFIACPSCSRQNFDVVKTMNELEGRLEDLLVPLDVAVIGCVVNGPGEAKEAHIGLTGGTPNLIYIDGKPSQKLTNDNLVDELEKLIREKAAEKVEADAAVIARG</sequence>